<protein>
    <recommendedName>
        <fullName evidence="1">Adenylate kinase</fullName>
        <shortName evidence="1">AK</shortName>
        <ecNumber evidence="1">2.7.4.3</ecNumber>
    </recommendedName>
    <alternativeName>
        <fullName evidence="1">ATP-AMP transphosphorylase</fullName>
    </alternativeName>
    <alternativeName>
        <fullName evidence="1">ATP:AMP phosphotransferase</fullName>
    </alternativeName>
    <alternativeName>
        <fullName evidence="1">Adenylate monophosphate kinase</fullName>
    </alternativeName>
</protein>
<comment type="function">
    <text evidence="1">Catalyzes the reversible transfer of the terminal phosphate group between ATP and AMP. Plays an important role in cellular energy homeostasis and in adenine nucleotide metabolism.</text>
</comment>
<comment type="catalytic activity">
    <reaction evidence="1">
        <text>AMP + ATP = 2 ADP</text>
        <dbReference type="Rhea" id="RHEA:12973"/>
        <dbReference type="ChEBI" id="CHEBI:30616"/>
        <dbReference type="ChEBI" id="CHEBI:456215"/>
        <dbReference type="ChEBI" id="CHEBI:456216"/>
        <dbReference type="EC" id="2.7.4.3"/>
    </reaction>
</comment>
<comment type="pathway">
    <text evidence="1">Purine metabolism; AMP biosynthesis via salvage pathway; AMP from ADP: step 1/1.</text>
</comment>
<comment type="subunit">
    <text evidence="1">Monomer.</text>
</comment>
<comment type="subcellular location">
    <subcellularLocation>
        <location evidence="1">Cytoplasm</location>
    </subcellularLocation>
</comment>
<comment type="domain">
    <text evidence="1">Consists of three domains, a large central CORE domain and two small peripheral domains, NMPbind and LID, which undergo movements during catalysis. The LID domain closes over the site of phosphoryl transfer upon ATP binding. Assembling and dissambling the active center during each catalytic cycle provides an effective means to prevent ATP hydrolysis.</text>
</comment>
<comment type="similarity">
    <text evidence="1">Belongs to the adenylate kinase family.</text>
</comment>
<accession>Q606F1</accession>
<sequence>MRIMLLGSPGSGKGTQAKYLTERFGIPQISTGDMLRAAVREGTPLGMEAKKIMDAGQLVSDSIILGLIKERIAAPDCANGFLLDGFPRTIVQADALAELGVTLDHVVEIAVDDEEIVRRLSGRRVHPASGRTYHVVFNPPKVEGRDDETGEPLVQREDDKEETIRRRLEIYHVQTKPLVDYYRSKAAQGGVKFHTVPGVGSVEAIRDAVLASLA</sequence>
<gene>
    <name evidence="1" type="primary">adk</name>
    <name type="ordered locus">MCA2066</name>
</gene>
<keyword id="KW-0067">ATP-binding</keyword>
<keyword id="KW-0963">Cytoplasm</keyword>
<keyword id="KW-0418">Kinase</keyword>
<keyword id="KW-0545">Nucleotide biosynthesis</keyword>
<keyword id="KW-0547">Nucleotide-binding</keyword>
<keyword id="KW-1185">Reference proteome</keyword>
<keyword id="KW-0808">Transferase</keyword>
<proteinExistence type="inferred from homology"/>
<dbReference type="EC" id="2.7.4.3" evidence="1"/>
<dbReference type="EMBL" id="AE017282">
    <property type="protein sequence ID" value="AAU91965.1"/>
    <property type="molecule type" value="Genomic_DNA"/>
</dbReference>
<dbReference type="RefSeq" id="WP_010961310.1">
    <property type="nucleotide sequence ID" value="NC_002977.6"/>
</dbReference>
<dbReference type="SMR" id="Q606F1"/>
<dbReference type="STRING" id="243233.MCA2066"/>
<dbReference type="GeneID" id="88224292"/>
<dbReference type="KEGG" id="mca:MCA2066"/>
<dbReference type="eggNOG" id="COG0563">
    <property type="taxonomic scope" value="Bacteria"/>
</dbReference>
<dbReference type="HOGENOM" id="CLU_032354_1_2_6"/>
<dbReference type="UniPathway" id="UPA00588">
    <property type="reaction ID" value="UER00649"/>
</dbReference>
<dbReference type="Proteomes" id="UP000006821">
    <property type="component" value="Chromosome"/>
</dbReference>
<dbReference type="GO" id="GO:0005737">
    <property type="term" value="C:cytoplasm"/>
    <property type="evidence" value="ECO:0007669"/>
    <property type="project" value="UniProtKB-SubCell"/>
</dbReference>
<dbReference type="GO" id="GO:0004017">
    <property type="term" value="F:adenylate kinase activity"/>
    <property type="evidence" value="ECO:0007669"/>
    <property type="project" value="UniProtKB-UniRule"/>
</dbReference>
<dbReference type="GO" id="GO:0005524">
    <property type="term" value="F:ATP binding"/>
    <property type="evidence" value="ECO:0007669"/>
    <property type="project" value="UniProtKB-UniRule"/>
</dbReference>
<dbReference type="GO" id="GO:0044209">
    <property type="term" value="P:AMP salvage"/>
    <property type="evidence" value="ECO:0007669"/>
    <property type="project" value="UniProtKB-UniRule"/>
</dbReference>
<dbReference type="CDD" id="cd01428">
    <property type="entry name" value="ADK"/>
    <property type="match status" value="1"/>
</dbReference>
<dbReference type="FunFam" id="3.40.50.300:FF:000106">
    <property type="entry name" value="Adenylate kinase mitochondrial"/>
    <property type="match status" value="1"/>
</dbReference>
<dbReference type="Gene3D" id="3.40.50.300">
    <property type="entry name" value="P-loop containing nucleotide triphosphate hydrolases"/>
    <property type="match status" value="1"/>
</dbReference>
<dbReference type="HAMAP" id="MF_00235">
    <property type="entry name" value="Adenylate_kinase_Adk"/>
    <property type="match status" value="1"/>
</dbReference>
<dbReference type="InterPro" id="IPR006259">
    <property type="entry name" value="Adenyl_kin_sub"/>
</dbReference>
<dbReference type="InterPro" id="IPR000850">
    <property type="entry name" value="Adenylat/UMP-CMP_kin"/>
</dbReference>
<dbReference type="InterPro" id="IPR033690">
    <property type="entry name" value="Adenylat_kinase_CS"/>
</dbReference>
<dbReference type="InterPro" id="IPR007862">
    <property type="entry name" value="Adenylate_kinase_lid-dom"/>
</dbReference>
<dbReference type="InterPro" id="IPR027417">
    <property type="entry name" value="P-loop_NTPase"/>
</dbReference>
<dbReference type="NCBIfam" id="TIGR01351">
    <property type="entry name" value="adk"/>
    <property type="match status" value="1"/>
</dbReference>
<dbReference type="NCBIfam" id="NF001379">
    <property type="entry name" value="PRK00279.1-1"/>
    <property type="match status" value="1"/>
</dbReference>
<dbReference type="NCBIfam" id="NF001380">
    <property type="entry name" value="PRK00279.1-2"/>
    <property type="match status" value="1"/>
</dbReference>
<dbReference type="NCBIfam" id="NF001381">
    <property type="entry name" value="PRK00279.1-3"/>
    <property type="match status" value="1"/>
</dbReference>
<dbReference type="NCBIfam" id="NF011100">
    <property type="entry name" value="PRK14527.1"/>
    <property type="match status" value="1"/>
</dbReference>
<dbReference type="PANTHER" id="PTHR23359">
    <property type="entry name" value="NUCLEOTIDE KINASE"/>
    <property type="match status" value="1"/>
</dbReference>
<dbReference type="Pfam" id="PF00406">
    <property type="entry name" value="ADK"/>
    <property type="match status" value="1"/>
</dbReference>
<dbReference type="Pfam" id="PF05191">
    <property type="entry name" value="ADK_lid"/>
    <property type="match status" value="1"/>
</dbReference>
<dbReference type="PRINTS" id="PR00094">
    <property type="entry name" value="ADENYLTKNASE"/>
</dbReference>
<dbReference type="SUPFAM" id="SSF52540">
    <property type="entry name" value="P-loop containing nucleoside triphosphate hydrolases"/>
    <property type="match status" value="1"/>
</dbReference>
<dbReference type="PROSITE" id="PS00113">
    <property type="entry name" value="ADENYLATE_KINASE"/>
    <property type="match status" value="1"/>
</dbReference>
<feature type="chain" id="PRO_0000158792" description="Adenylate kinase">
    <location>
        <begin position="1"/>
        <end position="214"/>
    </location>
</feature>
<feature type="region of interest" description="NMP" evidence="1">
    <location>
        <begin position="30"/>
        <end position="59"/>
    </location>
</feature>
<feature type="region of interest" description="LID" evidence="1">
    <location>
        <begin position="122"/>
        <end position="159"/>
    </location>
</feature>
<feature type="binding site" evidence="1">
    <location>
        <begin position="10"/>
        <end position="15"/>
    </location>
    <ligand>
        <name>ATP</name>
        <dbReference type="ChEBI" id="CHEBI:30616"/>
    </ligand>
</feature>
<feature type="binding site" evidence="1">
    <location>
        <position position="31"/>
    </location>
    <ligand>
        <name>AMP</name>
        <dbReference type="ChEBI" id="CHEBI:456215"/>
    </ligand>
</feature>
<feature type="binding site" evidence="1">
    <location>
        <position position="36"/>
    </location>
    <ligand>
        <name>AMP</name>
        <dbReference type="ChEBI" id="CHEBI:456215"/>
    </ligand>
</feature>
<feature type="binding site" evidence="1">
    <location>
        <begin position="57"/>
        <end position="59"/>
    </location>
    <ligand>
        <name>AMP</name>
        <dbReference type="ChEBI" id="CHEBI:456215"/>
    </ligand>
</feature>
<feature type="binding site" evidence="1">
    <location>
        <begin position="85"/>
        <end position="88"/>
    </location>
    <ligand>
        <name>AMP</name>
        <dbReference type="ChEBI" id="CHEBI:456215"/>
    </ligand>
</feature>
<feature type="binding site" evidence="1">
    <location>
        <position position="92"/>
    </location>
    <ligand>
        <name>AMP</name>
        <dbReference type="ChEBI" id="CHEBI:456215"/>
    </ligand>
</feature>
<feature type="binding site" evidence="1">
    <location>
        <position position="123"/>
    </location>
    <ligand>
        <name>ATP</name>
        <dbReference type="ChEBI" id="CHEBI:30616"/>
    </ligand>
</feature>
<feature type="binding site" evidence="1">
    <location>
        <begin position="132"/>
        <end position="133"/>
    </location>
    <ligand>
        <name>ATP</name>
        <dbReference type="ChEBI" id="CHEBI:30616"/>
    </ligand>
</feature>
<feature type="binding site" evidence="1">
    <location>
        <position position="156"/>
    </location>
    <ligand>
        <name>AMP</name>
        <dbReference type="ChEBI" id="CHEBI:456215"/>
    </ligand>
</feature>
<feature type="binding site" evidence="1">
    <location>
        <position position="167"/>
    </location>
    <ligand>
        <name>AMP</name>
        <dbReference type="ChEBI" id="CHEBI:456215"/>
    </ligand>
</feature>
<feature type="binding site" evidence="1">
    <location>
        <position position="200"/>
    </location>
    <ligand>
        <name>ATP</name>
        <dbReference type="ChEBI" id="CHEBI:30616"/>
    </ligand>
</feature>
<evidence type="ECO:0000255" key="1">
    <source>
        <dbReference type="HAMAP-Rule" id="MF_00235"/>
    </source>
</evidence>
<reference key="1">
    <citation type="journal article" date="2004" name="PLoS Biol.">
        <title>Genomic insights into methanotrophy: the complete genome sequence of Methylococcus capsulatus (Bath).</title>
        <authorList>
            <person name="Ward N.L."/>
            <person name="Larsen O."/>
            <person name="Sakwa J."/>
            <person name="Bruseth L."/>
            <person name="Khouri H.M."/>
            <person name="Durkin A.S."/>
            <person name="Dimitrov G."/>
            <person name="Jiang L."/>
            <person name="Scanlan D."/>
            <person name="Kang K.H."/>
            <person name="Lewis M.R."/>
            <person name="Nelson K.E."/>
            <person name="Methe B.A."/>
            <person name="Wu M."/>
            <person name="Heidelberg J.F."/>
            <person name="Paulsen I.T."/>
            <person name="Fouts D.E."/>
            <person name="Ravel J."/>
            <person name="Tettelin H."/>
            <person name="Ren Q."/>
            <person name="Read T.D."/>
            <person name="DeBoy R.T."/>
            <person name="Seshadri R."/>
            <person name="Salzberg S.L."/>
            <person name="Jensen H.B."/>
            <person name="Birkeland N.K."/>
            <person name="Nelson W.C."/>
            <person name="Dodson R.J."/>
            <person name="Grindhaug S.H."/>
            <person name="Holt I.E."/>
            <person name="Eidhammer I."/>
            <person name="Jonasen I."/>
            <person name="Vanaken S."/>
            <person name="Utterback T.R."/>
            <person name="Feldblyum T.V."/>
            <person name="Fraser C.M."/>
            <person name="Lillehaug J.R."/>
            <person name="Eisen J.A."/>
        </authorList>
    </citation>
    <scope>NUCLEOTIDE SEQUENCE [LARGE SCALE GENOMIC DNA]</scope>
    <source>
        <strain>ATCC 33009 / NCIMB 11132 / Bath</strain>
    </source>
</reference>
<organism>
    <name type="scientific">Methylococcus capsulatus (strain ATCC 33009 / NCIMB 11132 / Bath)</name>
    <dbReference type="NCBI Taxonomy" id="243233"/>
    <lineage>
        <taxon>Bacteria</taxon>
        <taxon>Pseudomonadati</taxon>
        <taxon>Pseudomonadota</taxon>
        <taxon>Gammaproteobacteria</taxon>
        <taxon>Methylococcales</taxon>
        <taxon>Methylococcaceae</taxon>
        <taxon>Methylococcus</taxon>
    </lineage>
</organism>
<name>KAD_METCA</name>